<sequence>MQFHSSSALVTPFKKDLSVDEAVYEALIKRQILQGMDACVPVGTTGESATLTHKEHMHCIEIAIETCKNTKTPSNSRMKVLAGVGSNATSESLSLAKFAQKVGADAILCVSPYYNRPTQQGLFEHYKTIAQSVEIPVMLYDVPSRTGVSIEVPTALKLFREVPNIKAIKEASGSLKRVAELHCYEKDFHIFSGEDSLNHSIMFSGGKGVVSVTGNLMPNLISQMVNCALKHEYQQALEIQDKLFSLHQALFVETNPIPIKMAMHLAGLIENPSYRLPLVAPSKETIKLLEKTLQQYEVIA</sequence>
<organism>
    <name type="scientific">Helicobacter acinonychis (strain Sheeba)</name>
    <dbReference type="NCBI Taxonomy" id="382638"/>
    <lineage>
        <taxon>Bacteria</taxon>
        <taxon>Pseudomonadati</taxon>
        <taxon>Campylobacterota</taxon>
        <taxon>Epsilonproteobacteria</taxon>
        <taxon>Campylobacterales</taxon>
        <taxon>Helicobacteraceae</taxon>
        <taxon>Helicobacter</taxon>
    </lineage>
</organism>
<gene>
    <name evidence="1" type="primary">dapA</name>
    <name type="ordered locus">Hac_1117</name>
</gene>
<keyword id="KW-0028">Amino-acid biosynthesis</keyword>
<keyword id="KW-0963">Cytoplasm</keyword>
<keyword id="KW-0220">Diaminopimelate biosynthesis</keyword>
<keyword id="KW-0456">Lyase</keyword>
<keyword id="KW-0457">Lysine biosynthesis</keyword>
<keyword id="KW-0704">Schiff base</keyword>
<reference key="1">
    <citation type="journal article" date="2006" name="PLoS Genet.">
        <title>Who ate whom? Adaptive Helicobacter genomic changes that accompanied a host jump from early humans to large felines.</title>
        <authorList>
            <person name="Eppinger M."/>
            <person name="Baar C."/>
            <person name="Linz B."/>
            <person name="Raddatz G."/>
            <person name="Lanz C."/>
            <person name="Keller H."/>
            <person name="Morelli G."/>
            <person name="Gressmann H."/>
            <person name="Achtman M."/>
            <person name="Schuster S.C."/>
        </authorList>
    </citation>
    <scope>NUCLEOTIDE SEQUENCE [LARGE SCALE GENOMIC DNA]</scope>
    <source>
        <strain>Sheeba</strain>
    </source>
</reference>
<evidence type="ECO:0000255" key="1">
    <source>
        <dbReference type="HAMAP-Rule" id="MF_00418"/>
    </source>
</evidence>
<evidence type="ECO:0000305" key="2"/>
<proteinExistence type="inferred from homology"/>
<feature type="chain" id="PRO_1000050196" description="4-hydroxy-tetrahydrodipicolinate synthase">
    <location>
        <begin position="1"/>
        <end position="300"/>
    </location>
</feature>
<feature type="active site" description="Proton donor/acceptor" evidence="1">
    <location>
        <position position="140"/>
    </location>
</feature>
<feature type="active site" description="Schiff-base intermediate with substrate" evidence="1">
    <location>
        <position position="169"/>
    </location>
</feature>
<feature type="binding site" evidence="1">
    <location>
        <position position="45"/>
    </location>
    <ligand>
        <name>pyruvate</name>
        <dbReference type="ChEBI" id="CHEBI:15361"/>
    </ligand>
</feature>
<feature type="binding site" evidence="1">
    <location>
        <position position="210"/>
    </location>
    <ligand>
        <name>pyruvate</name>
        <dbReference type="ChEBI" id="CHEBI:15361"/>
    </ligand>
</feature>
<feature type="site" description="Part of a proton relay during catalysis" evidence="1">
    <location>
        <position position="44"/>
    </location>
</feature>
<feature type="site" description="Part of a proton relay during catalysis" evidence="1">
    <location>
        <position position="114"/>
    </location>
</feature>
<name>DAPA_HELAH</name>
<dbReference type="EC" id="4.3.3.7" evidence="1"/>
<dbReference type="EMBL" id="AM260522">
    <property type="protein sequence ID" value="CAJ99879.1"/>
    <property type="molecule type" value="Genomic_DNA"/>
</dbReference>
<dbReference type="RefSeq" id="WP_011577986.1">
    <property type="nucleotide sequence ID" value="NC_008229.1"/>
</dbReference>
<dbReference type="SMR" id="Q17WU7"/>
<dbReference type="STRING" id="382638.Hac_1117"/>
<dbReference type="GeneID" id="31758473"/>
<dbReference type="KEGG" id="hac:Hac_1117"/>
<dbReference type="eggNOG" id="COG0329">
    <property type="taxonomic scope" value="Bacteria"/>
</dbReference>
<dbReference type="HOGENOM" id="CLU_049343_7_1_7"/>
<dbReference type="OrthoDB" id="9782828at2"/>
<dbReference type="BioCyc" id="HACI382638:HAC_RS04800-MONOMER"/>
<dbReference type="UniPathway" id="UPA00034">
    <property type="reaction ID" value="UER00017"/>
</dbReference>
<dbReference type="Proteomes" id="UP000000775">
    <property type="component" value="Chromosome"/>
</dbReference>
<dbReference type="GO" id="GO:0005829">
    <property type="term" value="C:cytosol"/>
    <property type="evidence" value="ECO:0007669"/>
    <property type="project" value="TreeGrafter"/>
</dbReference>
<dbReference type="GO" id="GO:0008840">
    <property type="term" value="F:4-hydroxy-tetrahydrodipicolinate synthase activity"/>
    <property type="evidence" value="ECO:0007669"/>
    <property type="project" value="UniProtKB-UniRule"/>
</dbReference>
<dbReference type="GO" id="GO:0019877">
    <property type="term" value="P:diaminopimelate biosynthetic process"/>
    <property type="evidence" value="ECO:0007669"/>
    <property type="project" value="UniProtKB-UniRule"/>
</dbReference>
<dbReference type="GO" id="GO:0009089">
    <property type="term" value="P:lysine biosynthetic process via diaminopimelate"/>
    <property type="evidence" value="ECO:0007669"/>
    <property type="project" value="UniProtKB-UniRule"/>
</dbReference>
<dbReference type="CDD" id="cd00950">
    <property type="entry name" value="DHDPS"/>
    <property type="match status" value="1"/>
</dbReference>
<dbReference type="Gene3D" id="3.20.20.70">
    <property type="entry name" value="Aldolase class I"/>
    <property type="match status" value="1"/>
</dbReference>
<dbReference type="HAMAP" id="MF_00418">
    <property type="entry name" value="DapA"/>
    <property type="match status" value="1"/>
</dbReference>
<dbReference type="InterPro" id="IPR013785">
    <property type="entry name" value="Aldolase_TIM"/>
</dbReference>
<dbReference type="InterPro" id="IPR005263">
    <property type="entry name" value="DapA"/>
</dbReference>
<dbReference type="InterPro" id="IPR002220">
    <property type="entry name" value="DapA-like"/>
</dbReference>
<dbReference type="InterPro" id="IPR020625">
    <property type="entry name" value="Schiff_base-form_aldolases_AS"/>
</dbReference>
<dbReference type="NCBIfam" id="TIGR00674">
    <property type="entry name" value="dapA"/>
    <property type="match status" value="1"/>
</dbReference>
<dbReference type="PANTHER" id="PTHR12128:SF66">
    <property type="entry name" value="4-HYDROXY-2-OXOGLUTARATE ALDOLASE, MITOCHONDRIAL"/>
    <property type="match status" value="1"/>
</dbReference>
<dbReference type="PANTHER" id="PTHR12128">
    <property type="entry name" value="DIHYDRODIPICOLINATE SYNTHASE"/>
    <property type="match status" value="1"/>
</dbReference>
<dbReference type="Pfam" id="PF00701">
    <property type="entry name" value="DHDPS"/>
    <property type="match status" value="1"/>
</dbReference>
<dbReference type="PIRSF" id="PIRSF001365">
    <property type="entry name" value="DHDPS"/>
    <property type="match status" value="1"/>
</dbReference>
<dbReference type="PRINTS" id="PR00146">
    <property type="entry name" value="DHPICSNTHASE"/>
</dbReference>
<dbReference type="SMART" id="SM01130">
    <property type="entry name" value="DHDPS"/>
    <property type="match status" value="1"/>
</dbReference>
<dbReference type="SUPFAM" id="SSF51569">
    <property type="entry name" value="Aldolase"/>
    <property type="match status" value="1"/>
</dbReference>
<dbReference type="PROSITE" id="PS00666">
    <property type="entry name" value="DHDPS_2"/>
    <property type="match status" value="1"/>
</dbReference>
<protein>
    <recommendedName>
        <fullName evidence="1">4-hydroxy-tetrahydrodipicolinate synthase</fullName>
        <shortName evidence="1">HTPA synthase</shortName>
        <ecNumber evidence="1">4.3.3.7</ecNumber>
    </recommendedName>
</protein>
<accession>Q17WU7</accession>
<comment type="function">
    <text evidence="1">Catalyzes the condensation of (S)-aspartate-beta-semialdehyde [(S)-ASA] and pyruvate to 4-hydroxy-tetrahydrodipicolinate (HTPA).</text>
</comment>
<comment type="catalytic activity">
    <reaction evidence="1">
        <text>L-aspartate 4-semialdehyde + pyruvate = (2S,4S)-4-hydroxy-2,3,4,5-tetrahydrodipicolinate + H2O + H(+)</text>
        <dbReference type="Rhea" id="RHEA:34171"/>
        <dbReference type="ChEBI" id="CHEBI:15361"/>
        <dbReference type="ChEBI" id="CHEBI:15377"/>
        <dbReference type="ChEBI" id="CHEBI:15378"/>
        <dbReference type="ChEBI" id="CHEBI:67139"/>
        <dbReference type="ChEBI" id="CHEBI:537519"/>
        <dbReference type="EC" id="4.3.3.7"/>
    </reaction>
</comment>
<comment type="pathway">
    <text evidence="1">Amino-acid biosynthesis; L-lysine biosynthesis via DAP pathway; (S)-tetrahydrodipicolinate from L-aspartate: step 3/4.</text>
</comment>
<comment type="subunit">
    <text evidence="1">Homotetramer; dimer of dimers.</text>
</comment>
<comment type="subcellular location">
    <subcellularLocation>
        <location evidence="1">Cytoplasm</location>
    </subcellularLocation>
</comment>
<comment type="similarity">
    <text evidence="1">Belongs to the DapA family.</text>
</comment>
<comment type="caution">
    <text evidence="2">Was originally thought to be a dihydrodipicolinate synthase (DHDPS), catalyzing the condensation of (S)-aspartate-beta-semialdehyde [(S)-ASA] and pyruvate to dihydrodipicolinate (DHDP). However, it was shown in E.coli that the product of the enzymatic reaction is not dihydrodipicolinate but in fact (4S)-4-hydroxy-2,3,4,5-tetrahydro-(2S)-dipicolinic acid (HTPA), and that the consecutive dehydration reaction leading to DHDP is not spontaneous but catalyzed by DapB.</text>
</comment>